<proteinExistence type="evidence at transcript level"/>
<organism>
    <name type="scientific">Homo sapiens</name>
    <name type="common">Human</name>
    <dbReference type="NCBI Taxonomy" id="9606"/>
    <lineage>
        <taxon>Eukaryota</taxon>
        <taxon>Metazoa</taxon>
        <taxon>Chordata</taxon>
        <taxon>Craniata</taxon>
        <taxon>Vertebrata</taxon>
        <taxon>Euteleostomi</taxon>
        <taxon>Mammalia</taxon>
        <taxon>Eutheria</taxon>
        <taxon>Euarchontoglires</taxon>
        <taxon>Primates</taxon>
        <taxon>Haplorrhini</taxon>
        <taxon>Catarrhini</taxon>
        <taxon>Hominidae</taxon>
        <taxon>Homo</taxon>
    </lineage>
</organism>
<keyword id="KW-0963">Cytoplasm</keyword>
<keyword id="KW-1185">Reference proteome</keyword>
<keyword id="KW-0964">Secreted</keyword>
<protein>
    <recommendedName>
        <fullName evidence="4">Humanin-like 9</fullName>
        <shortName evidence="3">HN9</shortName>
    </recommendedName>
    <alternativeName>
        <fullName evidence="6">MT-RNR2-like protein 9</fullName>
    </alternativeName>
</protein>
<sequence length="24" mass="2694">MARRGFSCLLLSTTATDLPVKRRT</sequence>
<accession>P0CJ76</accession>
<name>HMN9_HUMAN</name>
<dbReference type="EMBL" id="AL356135">
    <property type="status" value="NOT_ANNOTATED_CDS"/>
    <property type="molecule type" value="Genomic_DNA"/>
</dbReference>
<dbReference type="RefSeq" id="NP_001177635.1">
    <property type="nucleotide sequence ID" value="NM_001190706.1"/>
</dbReference>
<dbReference type="BioMuta" id="HGNC:37166"/>
<dbReference type="PaxDb" id="9606-ENSP00000474840"/>
<dbReference type="DNASU" id="100463487"/>
<dbReference type="UCSC" id="uc032wzo.1">
    <property type="organism name" value="human"/>
</dbReference>
<dbReference type="AGR" id="HGNC:37166"/>
<dbReference type="GeneCards" id="MTRNR2L9"/>
<dbReference type="HGNC" id="HGNC:37166">
    <property type="gene designation" value="MTRNR2L9"/>
</dbReference>
<dbReference type="neXtProt" id="NX_P0CJ76"/>
<dbReference type="InParanoid" id="P0CJ76"/>
<dbReference type="PAN-GO" id="P0CJ76">
    <property type="GO annotations" value="2 GO annotations based on evolutionary models"/>
</dbReference>
<dbReference type="PhylomeDB" id="P0CJ76"/>
<dbReference type="PathwayCommons" id="P0CJ76"/>
<dbReference type="BioGRID-ORCS" id="100463487">
    <property type="hits" value="4 hits in 527 CRISPR screens"/>
</dbReference>
<dbReference type="ChiTaRS" id="MTRNR2L9">
    <property type="organism name" value="human"/>
</dbReference>
<dbReference type="Pharos" id="P0CJ76">
    <property type="development level" value="Tdark"/>
</dbReference>
<dbReference type="PRO" id="PR:P0CJ76"/>
<dbReference type="Proteomes" id="UP000005640">
    <property type="component" value="Unplaced"/>
</dbReference>
<dbReference type="GO" id="GO:0005737">
    <property type="term" value="C:cytoplasm"/>
    <property type="evidence" value="ECO:0007669"/>
    <property type="project" value="UniProtKB-SubCell"/>
</dbReference>
<dbReference type="GO" id="GO:0005576">
    <property type="term" value="C:extracellular region"/>
    <property type="evidence" value="ECO:0007669"/>
    <property type="project" value="UniProtKB-SubCell"/>
</dbReference>
<dbReference type="GO" id="GO:0048019">
    <property type="term" value="F:receptor antagonist activity"/>
    <property type="evidence" value="ECO:0000318"/>
    <property type="project" value="GO_Central"/>
</dbReference>
<dbReference type="GO" id="GO:1900118">
    <property type="term" value="P:negative regulation of execution phase of apoptosis"/>
    <property type="evidence" value="ECO:0000318"/>
    <property type="project" value="GO_Central"/>
</dbReference>
<dbReference type="CDD" id="cd20245">
    <property type="entry name" value="humanin"/>
    <property type="match status" value="1"/>
</dbReference>
<dbReference type="InterPro" id="IPR028139">
    <property type="entry name" value="Humanin"/>
</dbReference>
<dbReference type="PANTHER" id="PTHR33895:SF18">
    <property type="entry name" value="HUMANIN-LIKE 1-RELATED"/>
    <property type="match status" value="1"/>
</dbReference>
<dbReference type="PANTHER" id="PTHR33895">
    <property type="entry name" value="HUMANIN-LIKE 4"/>
    <property type="match status" value="1"/>
</dbReference>
<dbReference type="Pfam" id="PF15040">
    <property type="entry name" value="Humanin"/>
    <property type="match status" value="1"/>
</dbReference>
<feature type="chain" id="PRO_0000404558" description="Humanin-like 9">
    <location>
        <begin position="1"/>
        <end position="24"/>
    </location>
</feature>
<gene>
    <name evidence="6" type="primary">MTRNR2L9</name>
</gene>
<reference key="1">
    <citation type="journal article" date="2003" name="Nature">
        <title>The DNA sequence and analysis of human chromosome 6.</title>
        <authorList>
            <person name="Mungall A.J."/>
            <person name="Palmer S.A."/>
            <person name="Sims S.K."/>
            <person name="Edwards C.A."/>
            <person name="Ashurst J.L."/>
            <person name="Wilming L."/>
            <person name="Jones M.C."/>
            <person name="Horton R."/>
            <person name="Hunt S.E."/>
            <person name="Scott C.E."/>
            <person name="Gilbert J.G.R."/>
            <person name="Clamp M.E."/>
            <person name="Bethel G."/>
            <person name="Milne S."/>
            <person name="Ainscough R."/>
            <person name="Almeida J.P."/>
            <person name="Ambrose K.D."/>
            <person name="Andrews T.D."/>
            <person name="Ashwell R.I.S."/>
            <person name="Babbage A.K."/>
            <person name="Bagguley C.L."/>
            <person name="Bailey J."/>
            <person name="Banerjee R."/>
            <person name="Barker D.J."/>
            <person name="Barlow K.F."/>
            <person name="Bates K."/>
            <person name="Beare D.M."/>
            <person name="Beasley H."/>
            <person name="Beasley O."/>
            <person name="Bird C.P."/>
            <person name="Blakey S.E."/>
            <person name="Bray-Allen S."/>
            <person name="Brook J."/>
            <person name="Brown A.J."/>
            <person name="Brown J.Y."/>
            <person name="Burford D.C."/>
            <person name="Burrill W."/>
            <person name="Burton J."/>
            <person name="Carder C."/>
            <person name="Carter N.P."/>
            <person name="Chapman J.C."/>
            <person name="Clark S.Y."/>
            <person name="Clark G."/>
            <person name="Clee C.M."/>
            <person name="Clegg S."/>
            <person name="Cobley V."/>
            <person name="Collier R.E."/>
            <person name="Collins J.E."/>
            <person name="Colman L.K."/>
            <person name="Corby N.R."/>
            <person name="Coville G.J."/>
            <person name="Culley K.M."/>
            <person name="Dhami P."/>
            <person name="Davies J."/>
            <person name="Dunn M."/>
            <person name="Earthrowl M.E."/>
            <person name="Ellington A.E."/>
            <person name="Evans K.A."/>
            <person name="Faulkner L."/>
            <person name="Francis M.D."/>
            <person name="Frankish A."/>
            <person name="Frankland J."/>
            <person name="French L."/>
            <person name="Garner P."/>
            <person name="Garnett J."/>
            <person name="Ghori M.J."/>
            <person name="Gilby L.M."/>
            <person name="Gillson C.J."/>
            <person name="Glithero R.J."/>
            <person name="Grafham D.V."/>
            <person name="Grant M."/>
            <person name="Gribble S."/>
            <person name="Griffiths C."/>
            <person name="Griffiths M.N.D."/>
            <person name="Hall R."/>
            <person name="Halls K.S."/>
            <person name="Hammond S."/>
            <person name="Harley J.L."/>
            <person name="Hart E.A."/>
            <person name="Heath P.D."/>
            <person name="Heathcott R."/>
            <person name="Holmes S.J."/>
            <person name="Howden P.J."/>
            <person name="Howe K.L."/>
            <person name="Howell G.R."/>
            <person name="Huckle E."/>
            <person name="Humphray S.J."/>
            <person name="Humphries M.D."/>
            <person name="Hunt A.R."/>
            <person name="Johnson C.M."/>
            <person name="Joy A.A."/>
            <person name="Kay M."/>
            <person name="Keenan S.J."/>
            <person name="Kimberley A.M."/>
            <person name="King A."/>
            <person name="Laird G.K."/>
            <person name="Langford C."/>
            <person name="Lawlor S."/>
            <person name="Leongamornlert D.A."/>
            <person name="Leversha M."/>
            <person name="Lloyd C.R."/>
            <person name="Lloyd D.M."/>
            <person name="Loveland J.E."/>
            <person name="Lovell J."/>
            <person name="Martin S."/>
            <person name="Mashreghi-Mohammadi M."/>
            <person name="Maslen G.L."/>
            <person name="Matthews L."/>
            <person name="McCann O.T."/>
            <person name="McLaren S.J."/>
            <person name="McLay K."/>
            <person name="McMurray A."/>
            <person name="Moore M.J.F."/>
            <person name="Mullikin J.C."/>
            <person name="Niblett D."/>
            <person name="Nickerson T."/>
            <person name="Novik K.L."/>
            <person name="Oliver K."/>
            <person name="Overton-Larty E.K."/>
            <person name="Parker A."/>
            <person name="Patel R."/>
            <person name="Pearce A.V."/>
            <person name="Peck A.I."/>
            <person name="Phillimore B.J.C.T."/>
            <person name="Phillips S."/>
            <person name="Plumb R.W."/>
            <person name="Porter K.M."/>
            <person name="Ramsey Y."/>
            <person name="Ranby S.A."/>
            <person name="Rice C.M."/>
            <person name="Ross M.T."/>
            <person name="Searle S.M."/>
            <person name="Sehra H.K."/>
            <person name="Sheridan E."/>
            <person name="Skuce C.D."/>
            <person name="Smith S."/>
            <person name="Smith M."/>
            <person name="Spraggon L."/>
            <person name="Squares S.L."/>
            <person name="Steward C.A."/>
            <person name="Sycamore N."/>
            <person name="Tamlyn-Hall G."/>
            <person name="Tester J."/>
            <person name="Theaker A.J."/>
            <person name="Thomas D.W."/>
            <person name="Thorpe A."/>
            <person name="Tracey A."/>
            <person name="Tromans A."/>
            <person name="Tubby B."/>
            <person name="Wall M."/>
            <person name="Wallis J.M."/>
            <person name="West A.P."/>
            <person name="White S.S."/>
            <person name="Whitehead S.L."/>
            <person name="Whittaker H."/>
            <person name="Wild A."/>
            <person name="Willey D.J."/>
            <person name="Wilmer T.E."/>
            <person name="Wood J.M."/>
            <person name="Wray P.W."/>
            <person name="Wyatt J.C."/>
            <person name="Young L."/>
            <person name="Younger R.M."/>
            <person name="Bentley D.R."/>
            <person name="Coulson A."/>
            <person name="Durbin R.M."/>
            <person name="Hubbard T."/>
            <person name="Sulston J.E."/>
            <person name="Dunham I."/>
            <person name="Rogers J."/>
            <person name="Beck S."/>
        </authorList>
    </citation>
    <scope>NUCLEOTIDE SEQUENCE [LARGE SCALE GENOMIC DNA]</scope>
</reference>
<reference key="2">
    <citation type="journal article" date="2009" name="Genomics">
        <title>Evidence for potential functionality of nuclearly-encoded humanin isoforms.</title>
        <authorList>
            <person name="Bodzioch M."/>
            <person name="Lapicka-Bodzioch K."/>
            <person name="Zapala B."/>
            <person name="Kamysz W."/>
            <person name="Kiec-Wilk B."/>
            <person name="Dembinska-Kiec A."/>
        </authorList>
    </citation>
    <scope>TISSUE SPECIFICITY</scope>
    <scope>INDUCTION</scope>
</reference>
<comment type="function">
    <text evidence="1">Plays a role as a neuroprotective and antiapoptotic factor.</text>
</comment>
<comment type="subcellular location">
    <subcellularLocation>
        <location evidence="1">Secreted</location>
    </subcellularLocation>
    <subcellularLocation>
        <location evidence="1">Cytoplasm</location>
    </subcellularLocation>
</comment>
<comment type="tissue specificity">
    <text evidence="2">Highly expressed in the kidney, heart muscle and testis.</text>
</comment>
<comment type="induction">
    <text evidence="2">Down-regulated 6 hours following staurosporine (STS) treatment and up-regulated 24 hours following STS treatment. Down-regulated 6 hours following beta-carotene treatment, returning to its basal level 24 hours following beta-carotene treatment.</text>
</comment>
<comment type="similarity">
    <text evidence="4">Belongs to the humanin family.</text>
</comment>
<comment type="caution">
    <text evidence="5">The humanin peptide has been shown to be biologically active but is the product of a mitochondrial gene, MT-RNR2. The mechanisms allowing the production and the secretion of humanin from the mitochondrial gene remaining unclear, the possibility exist that the physiologically active humanin peptide is encoded by one of the related genes present in the nuclear genome including the one described here (PubMed:19477263).</text>
</comment>
<evidence type="ECO:0000250" key="1">
    <source>
        <dbReference type="UniProtKB" id="Q8IVG9"/>
    </source>
</evidence>
<evidence type="ECO:0000269" key="2">
    <source>
    </source>
</evidence>
<evidence type="ECO:0000303" key="3">
    <source>
    </source>
</evidence>
<evidence type="ECO:0000305" key="4"/>
<evidence type="ECO:0000305" key="5">
    <source>
    </source>
</evidence>
<evidence type="ECO:0000312" key="6">
    <source>
        <dbReference type="HGNC" id="HGNC:37166"/>
    </source>
</evidence>